<protein>
    <recommendedName>
        <fullName>Epstein-Barr nuclear antigen 1</fullName>
        <shortName>EBNA-1</shortName>
        <shortName>EBV nuclear antigen 1</shortName>
        <ecNumber evidence="1">3.1.21.-</ecNumber>
    </recommendedName>
</protein>
<reference key="1">
    <citation type="journal article" date="2006" name="Virology">
        <title>The genome of Epstein-Barr virus type 2 strain AG876.</title>
        <authorList>
            <person name="Dolan A."/>
            <person name="Addison C."/>
            <person name="Gatherer D."/>
            <person name="Davison A.J."/>
            <person name="McGeoch D.J."/>
        </authorList>
    </citation>
    <scope>NUCLEOTIDE SEQUENCE [LARGE SCALE GENOMIC DNA]</scope>
</reference>
<keyword id="KW-0002">3D-structure</keyword>
<keyword id="KW-0010">Activator</keyword>
<keyword id="KW-0190">Covalent protein-DNA linkage</keyword>
<keyword id="KW-0238">DNA-binding</keyword>
<keyword id="KW-0255">Endonuclease</keyword>
<keyword id="KW-1048">Host nucleus</keyword>
<keyword id="KW-0945">Host-virus interaction</keyword>
<keyword id="KW-0378">Hydrolase</keyword>
<keyword id="KW-1100">Inhibition of host NF-kappa-B by virus</keyword>
<keyword id="KW-0540">Nuclease</keyword>
<keyword id="KW-0597">Phosphoprotein</keyword>
<keyword id="KW-1185">Reference proteome</keyword>
<keyword id="KW-0804">Transcription</keyword>
<keyword id="KW-0805">Transcription regulation</keyword>
<keyword id="KW-1251">Viral latency</keyword>
<keyword id="KW-1276">Viral latency initiation and maintenance</keyword>
<comment type="function">
    <text evidence="1">Responsible for the origin of replication (oriP) dependent replication and maintenance of viral episomes during latent infection. EBNA1 dimer interacts with the DS (dyad symmetry) element within the origin of replication oriP and with a host mitotic chromosome to initiate viral DNA replication during latency. EBNA1 binding to DS recruits the host origin recognition complex (ORC). Governs the faithful mitotic segregation of the viral episomes by binding both the FR (family of repeats) element within oriP and the host mitotic chromosomes. Forms a cell cycle-dependent tyrosine-dependent DNA cross-link and single-strand cleavage at oriP required for terminating replication and maintaining viral episomes. Counteracts the stabilization of host p53/TP53 by host USP7, thereby decreasing apoptosis and increasing host cell survival. Induces degradation of host PML through the ubiquitin-proteasome system, which promotes lytic reactivation and may impair the host cell DNA repair. Increases the association of CK2 with PML proteins which increases the phosphorylation of PML proteins by CK2, triggering the polyubiquitylation and degradation of PML. Displays inhibitory effects on a SUMO2-modified complex that includes STUB1, KAP1 and USP7. This inhibitory effect possibly participates to the maintenance of latency linked to PML silencing.</text>
</comment>
<comment type="subunit">
    <text evidence="1">Homodimer. Dimers can assemble into higher-order oligomers like a homohexamer. Binding to the DS element involves 2 dimers of EBNA1. Interacts with human USP7; this interaction is independent and simultaneous to EBNA1 interaction with CSNK2B as well as necessary for PML nuclear bodies disruption by EBNA1. Interacts with host CSNK2B (via KSSR motif); the interaction requires phosphorylation of EBNA1, is independent and simultaneous to EBNA1 interaction with USP7 as well as necessary for PML nuclear bodies disruption by EBNA1. EBNA1, USP7 and CSNK2B form a ternary complex. EBNA1, USP7 and CSNK2B form a ternary complex. Interacts with human EBP2; it is not clear if this interaction is linked with the ability of EBNA1 to associate with host mitotic chromosomes. Interacts with BGLF4; this interaction facilitates the switch from latent to lytic DNA replication by down-regulating EBNA1 replication function. Interacts with human PAX5; this interaction promotes EBNA1-dependent transcription. Interacts with host KPNA1/Importin subunit alpha-5; this interaction allows the nuclear import of EBNA1. Interacts with host KPNA2/Importin subunit alpha-1; this interaction allows the nuclear import of EBNA1. Interacts with host C1QBP/P32. Interacts with host BIRC5/Survivin; this interaction is probably important for EBV episome maintenance in Burkitt's lymphoma host cells.</text>
</comment>
<comment type="subcellular location">
    <subcellularLocation>
        <location evidence="1">Host nucleus</location>
    </subcellularLocation>
</comment>
<comment type="domain">
    <text evidence="1">The N-terminus contains the region UR1 that binds zinc and is essential for EBNA1 to activate transcription. This domain dimerizes upon coordinating. The Gly-Gly-Ala repeat region (GAr) inhibits the mRNA translation of EBNA1 in cis and thus prevents MHC-I restricted presentation of EBNA1 epitopes to the host cytotoxic T cells. The chromosome-tethering regions contain Gly-Arg (GR) repeats that function as AT hooks and are involved in EBNA1 stable replication and partition of episomes. The C-terminus DNA binding and dimerization domain (DBD/DD) is required for the viral latent DNA replication.</text>
</comment>
<comment type="PTM">
    <text evidence="1">Phosphorylation at Ser-385 increases the nuclear import efficiency of EBNA1.</text>
</comment>
<comment type="PTM">
    <text evidence="1">Phosphorylation at Ser-393 is required for interaction with CSNK2B.</text>
</comment>
<comment type="miscellaneous">
    <text evidence="1">EBNA1 is possibly linked to multiple sclerosis in the host. Antibodies that recognize both EBNA1 and the host protein HEPACAM/GlialCAM can be produced when B cells undergo somatic hypermutations. A mimicry has also been proposed between ANO2 (Anoctamin 2) and EBNA1.</text>
</comment>
<comment type="similarity">
    <text evidence="3">Belongs to the herpesviridae EBNA1 family.</text>
</comment>
<feature type="chain" id="PRO_0000375933" description="Epstein-Barr nuclear antigen 1">
    <location>
        <begin position="1"/>
        <end position="641"/>
    </location>
</feature>
<feature type="region of interest" description="Disordered" evidence="2">
    <location>
        <begin position="1"/>
        <end position="124"/>
    </location>
</feature>
<feature type="region of interest" description="Chromosome-tethering GR1" evidence="1">
    <location>
        <begin position="40"/>
        <end position="67"/>
    </location>
</feature>
<feature type="region of interest" description="Interaction with host C1QBP/P32" evidence="1">
    <location>
        <begin position="40"/>
        <end position="60"/>
    </location>
</feature>
<feature type="region of interest" description="UR1" evidence="1">
    <location>
        <begin position="65"/>
        <end position="89"/>
    </location>
</feature>
<feature type="region of interest" description="GAr" evidence="1">
    <location>
        <begin position="90"/>
        <end position="325"/>
    </location>
</feature>
<feature type="region of interest" description="Disordered" evidence="2">
    <location>
        <begin position="234"/>
        <end position="475"/>
    </location>
</feature>
<feature type="region of interest" description="Interaction with host C1QBP/P32" evidence="1">
    <location>
        <begin position="325"/>
        <end position="376"/>
    </location>
</feature>
<feature type="region of interest" description="Chromosome-tethering GR2" evidence="1">
    <location>
        <begin position="328"/>
        <end position="378"/>
    </location>
</feature>
<feature type="region of interest" description="Nuclear localization signal" evidence="1">
    <location>
        <begin position="379"/>
        <end position="386"/>
    </location>
</feature>
<feature type="region of interest" description="Interaction with host CSNK2B" evidence="1">
    <location>
        <begin position="387"/>
        <end position="395"/>
    </location>
</feature>
<feature type="region of interest" description="Interaction with host USP7" evidence="1">
    <location>
        <begin position="436"/>
        <end position="450"/>
    </location>
</feature>
<feature type="region of interest" description="DBD/DD" evidence="1">
    <location>
        <begin position="452"/>
        <end position="607"/>
    </location>
</feature>
<feature type="region of interest" description="Disordered" evidence="2">
    <location>
        <begin position="612"/>
        <end position="641"/>
    </location>
</feature>
<feature type="compositionally biased region" description="Gly residues" evidence="2">
    <location>
        <begin position="1"/>
        <end position="14"/>
    </location>
</feature>
<feature type="compositionally biased region" description="Low complexity" evidence="2">
    <location>
        <begin position="22"/>
        <end position="32"/>
    </location>
</feature>
<feature type="compositionally biased region" description="Basic residues" evidence="2">
    <location>
        <begin position="41"/>
        <end position="50"/>
    </location>
</feature>
<feature type="compositionally biased region" description="Gly residues" evidence="2">
    <location>
        <begin position="51"/>
        <end position="62"/>
    </location>
</feature>
<feature type="compositionally biased region" description="Gly residues" evidence="2">
    <location>
        <begin position="84"/>
        <end position="124"/>
    </location>
</feature>
<feature type="compositionally biased region" description="Gly residues" evidence="2">
    <location>
        <begin position="234"/>
        <end position="352"/>
    </location>
</feature>
<feature type="compositionally biased region" description="Basic and acidic residues" evidence="2">
    <location>
        <begin position="358"/>
        <end position="381"/>
    </location>
</feature>
<feature type="compositionally biased region" description="Low complexity" evidence="2">
    <location>
        <begin position="383"/>
        <end position="394"/>
    </location>
</feature>
<feature type="compositionally biased region" description="Acidic residues" evidence="2">
    <location>
        <begin position="620"/>
        <end position="641"/>
    </location>
</feature>
<feature type="active site" description="For site-specific DNA cleavage activity" evidence="1">
    <location>
        <position position="518"/>
    </location>
</feature>
<feature type="binding site" evidence="1">
    <location>
        <position position="460"/>
    </location>
    <ligand>
        <name>DNA</name>
        <dbReference type="ChEBI" id="CHEBI:16991"/>
    </ligand>
</feature>
<feature type="binding site" evidence="1">
    <location>
        <position position="461"/>
    </location>
    <ligand>
        <name>DNA</name>
        <dbReference type="ChEBI" id="CHEBI:16991"/>
    </ligand>
</feature>
<feature type="binding site" description="covalent" evidence="1">
    <location>
        <position position="518"/>
    </location>
    <ligand>
        <name>DNA</name>
        <dbReference type="ChEBI" id="CHEBI:16991"/>
    </ligand>
</feature>
<feature type="site" description="Interaction dimer-dimer" evidence="1">
    <location>
        <position position="491"/>
    </location>
</feature>
<feature type="site" description="Required for episome maintenance" evidence="1">
    <location>
        <position position="518"/>
    </location>
</feature>
<feature type="site" description="Interaction dimer-dimer" evidence="1">
    <location>
        <position position="581"/>
    </location>
</feature>
<feature type="modified residue" description="Phosphoserine" evidence="1">
    <location>
        <position position="385"/>
    </location>
</feature>
<feature type="modified residue" description="Phosphoserine" evidence="1">
    <location>
        <position position="393"/>
    </location>
</feature>
<feature type="helix" evidence="4">
    <location>
        <begin position="413"/>
        <end position="415"/>
    </location>
</feature>
<organismHost>
    <name type="scientific">Homo sapiens</name>
    <name type="common">Human</name>
    <dbReference type="NCBI Taxonomy" id="9606"/>
</organismHost>
<organism>
    <name type="scientific">Epstein-Barr virus (strain AG876)</name>
    <name type="common">HHV-4</name>
    <name type="synonym">Human herpesvirus 4</name>
    <dbReference type="NCBI Taxonomy" id="82830"/>
    <lineage>
        <taxon>Viruses</taxon>
        <taxon>Duplodnaviria</taxon>
        <taxon>Heunggongvirae</taxon>
        <taxon>Peploviricota</taxon>
        <taxon>Herviviricetes</taxon>
        <taxon>Herpesvirales</taxon>
        <taxon>Orthoherpesviridae</taxon>
        <taxon>Gammaherpesvirinae</taxon>
        <taxon>Lymphocryptovirus</taxon>
        <taxon>Lymphocryptovirus humangamma4</taxon>
        <taxon>Epstein-Barr virus (strain GD1)</taxon>
    </lineage>
</organism>
<accession>Q1HVF7</accession>
<evidence type="ECO:0000250" key="1">
    <source>
        <dbReference type="UniProtKB" id="P03211"/>
    </source>
</evidence>
<evidence type="ECO:0000256" key="2">
    <source>
        <dbReference type="SAM" id="MobiDB-lite"/>
    </source>
</evidence>
<evidence type="ECO:0000305" key="3"/>
<evidence type="ECO:0007829" key="4">
    <source>
        <dbReference type="PDB" id="4PRN"/>
    </source>
</evidence>
<name>EBNA1_EBVA8</name>
<proteinExistence type="evidence at protein level"/>
<dbReference type="EC" id="3.1.21.-" evidence="1"/>
<dbReference type="EMBL" id="DQ279927">
    <property type="protein sequence ID" value="ABB89251.1"/>
    <property type="molecule type" value="Genomic_DNA"/>
</dbReference>
<dbReference type="RefSeq" id="YP_001129471.1">
    <property type="nucleotide sequence ID" value="NC_009334.1"/>
</dbReference>
<dbReference type="PDB" id="4PRB">
    <property type="method" value="X-ray"/>
    <property type="resolution" value="1.75 A"/>
    <property type="chains" value="C=407-417"/>
</dbReference>
<dbReference type="PDB" id="4PRN">
    <property type="method" value="X-ray"/>
    <property type="resolution" value="1.65 A"/>
    <property type="chains" value="C=407-417"/>
</dbReference>
<dbReference type="PDBsum" id="4PRB"/>
<dbReference type="PDBsum" id="4PRN"/>
<dbReference type="SMR" id="Q1HVF7"/>
<dbReference type="KEGG" id="vg:5176225"/>
<dbReference type="EvolutionaryTrace" id="Q1HVF7"/>
<dbReference type="Proteomes" id="UP000007639">
    <property type="component" value="Genome"/>
</dbReference>
<dbReference type="GO" id="GO:0042025">
    <property type="term" value="C:host cell nucleus"/>
    <property type="evidence" value="ECO:0007669"/>
    <property type="project" value="UniProtKB-SubCell"/>
</dbReference>
<dbReference type="GO" id="GO:0003677">
    <property type="term" value="F:DNA binding"/>
    <property type="evidence" value="ECO:0007669"/>
    <property type="project" value="UniProtKB-KW"/>
</dbReference>
<dbReference type="GO" id="GO:0003700">
    <property type="term" value="F:DNA-binding transcription factor activity"/>
    <property type="evidence" value="ECO:0007669"/>
    <property type="project" value="InterPro"/>
</dbReference>
<dbReference type="GO" id="GO:0004519">
    <property type="term" value="F:endonuclease activity"/>
    <property type="evidence" value="ECO:0007669"/>
    <property type="project" value="UniProtKB-KW"/>
</dbReference>
<dbReference type="GO" id="GO:0045893">
    <property type="term" value="P:positive regulation of DNA-templated transcription"/>
    <property type="evidence" value="ECO:0007669"/>
    <property type="project" value="InterPro"/>
</dbReference>
<dbReference type="GO" id="GO:0006275">
    <property type="term" value="P:regulation of DNA replication"/>
    <property type="evidence" value="ECO:0007669"/>
    <property type="project" value="InterPro"/>
</dbReference>
<dbReference type="GO" id="GO:0085034">
    <property type="term" value="P:symbiont-mediated suppression of host NF-kappaB cascade"/>
    <property type="evidence" value="ECO:0007669"/>
    <property type="project" value="UniProtKB-KW"/>
</dbReference>
<dbReference type="GO" id="GO:0019042">
    <property type="term" value="P:viral latency"/>
    <property type="evidence" value="ECO:0007669"/>
    <property type="project" value="UniProtKB-KW"/>
</dbReference>
<dbReference type="Gene3D" id="3.30.70.390">
    <property type="entry name" value="Epstein Barr virus nuclear antigen-1, DNA-binding domain"/>
    <property type="match status" value="1"/>
</dbReference>
<dbReference type="InterPro" id="IPR035975">
    <property type="entry name" value="E2/EBNA1_C_sf"/>
</dbReference>
<dbReference type="InterPro" id="IPR004186">
    <property type="entry name" value="EBNA1_DNA-bd"/>
</dbReference>
<dbReference type="InterPro" id="IPR037007">
    <property type="entry name" value="EBNA1_DNA-bd_sf"/>
</dbReference>
<dbReference type="PANTHER" id="PTHR40903">
    <property type="entry name" value="GLYCINE-RICH CELL WALL STRUCTURAL PROTEIN 1-LIKE"/>
    <property type="match status" value="1"/>
</dbReference>
<dbReference type="PANTHER" id="PTHR40903:SF1">
    <property type="entry name" value="HYPHALLY REGULATED CELL WALL PROTEIN 3"/>
    <property type="match status" value="1"/>
</dbReference>
<dbReference type="Pfam" id="PF02905">
    <property type="entry name" value="EBV-NA1"/>
    <property type="match status" value="1"/>
</dbReference>
<dbReference type="SUPFAM" id="SSF54957">
    <property type="entry name" value="Viral DNA-binding domain"/>
    <property type="match status" value="1"/>
</dbReference>
<sequence>MSDEGPGTGPGNGLGQKEDTSGPDGSSGSGPQRRGGDNHGRGRGRGRGRGGGRPGAPGGSGSGPRHRDGVRRPQKRPSCIGCKGAHGGTGAGGGAGAGGAGAGGAGAGGAGAGGAGAGGAGAGGAGAGGAGAGGAGAGGAGAGGGAGAGGAGAGGAGAGGGAGAGGGAGAGGGAGAGGGAGAGGGAGAGGGAGAGGGAGAGGGAGAGGGAGAGGAGAGGAGAGGGAGAGGGAGAGGGAGAGGGAGAGGGAGAGGGAGAGGGAGAGGGAGAGGGAGAGGGAGAGGGAGAGGGAGAGGGAGAGGGAGAGGGAGAGGGAGAGGGAGAGGGGRGRGGSGGRGRGGSGGRGRGGSGGRRGRGRERARGGSRERARGRGRGRGEKRPRSPSSQSSSSGSPPRRPPPGRRPFFHPVAEADYFEYHQEGGPDGEPDMPPGAIEQGPADDPGEGPSTGPRGQGDGGRRKKGGWYGKHRGEGGSSQKFENIAEGLRLLLARCHVERTTEDGNWVAGVFVYGGSKTSLYNLRRGIGLAIPQCRLTPLSRLPFGMAPGPGPQPGPLRESIVCYFIVFLQTHIFAEGLKDAIKDLVLPKPAPTCNIKVTVCSFDDGVDLPPWFPPMVEGAAAEGDDGDDGDEGGDGDEGEEGQE</sequence>
<gene>
    <name type="primary">EBNA1</name>
    <name type="ORF">BKRF1</name>
</gene>